<sequence>MKFKLHVNSARQYKDLWNMSDDKPFLCTAPGCGQRFTNEDHLAVHKHKHEMTLKFGPARNDSVIVADQTPTPTRFLKNCEEVGLFNELASPFENEFKKASEDDIKKMPLDLSPLATPIIRSKIEEPSVVETTHQDSPLPHPESTTSDEKEVPLAQTAQPTSAIVRPASLQVPNVLLTSSDSSVIIQQAVPSPTSSTVITQAPSSNRPIVPVPGPFPLLLHLPNGQTMPVAIPASITSSNVHVPAAVPLVRPVTMVPSVPGIPGPSSPQPVQSEAKMRLKAALTQQHPPVTNGDTVKGHGSGLVRTQSEESRPQSLQQPATSTTETPASPAHTTPQTQSTSGRRRRAANEDPDEKRRKFLERNRAAASRCRQKRKVWVQSLEKKAEDLSSLNGQLQSEVTLLRNEVAQLKQLLLAHKDCPVTAMQKKSGYHTADKDDSSEDISVPSSPHTEAIQHSSVSTSNGVSSTSKAEAVATSVLTQMADQSTEPALSQIVMAPSSQSQPSGS</sequence>
<evidence type="ECO:0000255" key="1">
    <source>
        <dbReference type="PROSITE-ProRule" id="PRU00042"/>
    </source>
</evidence>
<evidence type="ECO:0000255" key="2">
    <source>
        <dbReference type="PROSITE-ProRule" id="PRU00978"/>
    </source>
</evidence>
<evidence type="ECO:0000256" key="3">
    <source>
        <dbReference type="SAM" id="MobiDB-lite"/>
    </source>
</evidence>
<evidence type="ECO:0000269" key="4">
    <source>
    </source>
</evidence>
<evidence type="ECO:0000269" key="5">
    <source>
    </source>
</evidence>
<evidence type="ECO:0000269" key="6">
    <source>
    </source>
</evidence>
<evidence type="ECO:0000269" key="7">
    <source>
    </source>
</evidence>
<evidence type="ECO:0000269" key="8">
    <source>
    </source>
</evidence>
<evidence type="ECO:0000269" key="9">
    <source>
    </source>
</evidence>
<evidence type="ECO:0000269" key="10">
    <source>
    </source>
</evidence>
<evidence type="ECO:0000269" key="11">
    <source>
    </source>
</evidence>
<evidence type="ECO:0000269" key="12">
    <source>
    </source>
</evidence>
<evidence type="ECO:0000269" key="13">
    <source>
    </source>
</evidence>
<evidence type="ECO:0000269" key="14">
    <source>
    </source>
</evidence>
<evidence type="ECO:0000269" key="15">
    <source>
    </source>
</evidence>
<evidence type="ECO:0000269" key="16">
    <source>
    </source>
</evidence>
<evidence type="ECO:0000269" key="17">
    <source>
    </source>
</evidence>
<evidence type="ECO:0000303" key="18">
    <source>
    </source>
</evidence>
<evidence type="ECO:0000303" key="19">
    <source>
    </source>
</evidence>
<evidence type="ECO:0000303" key="20">
    <source>
    </source>
</evidence>
<evidence type="ECO:0000303" key="21">
    <source ref="4"/>
</evidence>
<evidence type="ECO:0000305" key="22"/>
<evidence type="ECO:0007744" key="23">
    <source>
    </source>
</evidence>
<evidence type="ECO:0007744" key="24">
    <source>
    </source>
</evidence>
<evidence type="ECO:0007744" key="25">
    <source>
    </source>
</evidence>
<evidence type="ECO:0007744" key="26">
    <source>
    </source>
</evidence>
<evidence type="ECO:0007744" key="27">
    <source>
    </source>
</evidence>
<evidence type="ECO:0007744" key="28">
    <source>
    </source>
</evidence>
<evidence type="ECO:0007744" key="29">
    <source>
    </source>
</evidence>
<evidence type="ECO:0007829" key="30">
    <source>
        <dbReference type="PDB" id="1BHI"/>
    </source>
</evidence>
<evidence type="ECO:0007829" key="31">
    <source>
        <dbReference type="PDB" id="1T2K"/>
    </source>
</evidence>
<evidence type="ECO:0007829" key="32">
    <source>
        <dbReference type="PDB" id="6ZQS"/>
    </source>
</evidence>
<evidence type="ECO:0007829" key="33">
    <source>
        <dbReference type="PDB" id="6ZR5"/>
    </source>
</evidence>
<dbReference type="EMBL" id="X15875">
    <property type="protein sequence ID" value="CAA33886.1"/>
    <property type="molecule type" value="mRNA"/>
</dbReference>
<dbReference type="EMBL" id="U16028">
    <property type="protein sequence ID" value="AAB64017.1"/>
    <property type="molecule type" value="mRNA"/>
</dbReference>
<dbReference type="EMBL" id="AY029364">
    <property type="protein sequence ID" value="AAK55760.1"/>
    <property type="molecule type" value="mRNA"/>
</dbReference>
<dbReference type="EMBL" id="DQ003037">
    <property type="protein sequence ID" value="AAY17203.1"/>
    <property type="status" value="ALT_INIT"/>
    <property type="molecule type" value="mRNA"/>
</dbReference>
<dbReference type="EMBL" id="DQ003038">
    <property type="protein sequence ID" value="AAY17204.1"/>
    <property type="molecule type" value="mRNA"/>
</dbReference>
<dbReference type="EMBL" id="DQ003041">
    <property type="protein sequence ID" value="AAY17207.1"/>
    <property type="status" value="ALT_INIT"/>
    <property type="molecule type" value="mRNA"/>
</dbReference>
<dbReference type="EMBL" id="DQ003044">
    <property type="protein sequence ID" value="AAY17210.1"/>
    <property type="molecule type" value="mRNA"/>
</dbReference>
<dbReference type="EMBL" id="DQ003047">
    <property type="protein sequence ID" value="AAY17213.1"/>
    <property type="molecule type" value="mRNA"/>
</dbReference>
<dbReference type="EMBL" id="DQ003049">
    <property type="protein sequence ID" value="AAY17215.1"/>
    <property type="molecule type" value="mRNA"/>
</dbReference>
<dbReference type="EMBL" id="AC131958">
    <property type="protein sequence ID" value="AAX88876.1"/>
    <property type="molecule type" value="Genomic_DNA"/>
</dbReference>
<dbReference type="EMBL" id="AC074291">
    <property type="protein sequence ID" value="AAY15004.1"/>
    <property type="molecule type" value="Genomic_DNA"/>
</dbReference>
<dbReference type="EMBL" id="AC007435">
    <property type="status" value="NOT_ANNOTATED_CDS"/>
    <property type="molecule type" value="Genomic_DNA"/>
</dbReference>
<dbReference type="EMBL" id="AC096649">
    <property type="status" value="NOT_ANNOTATED_CDS"/>
    <property type="molecule type" value="Genomic_DNA"/>
</dbReference>
<dbReference type="EMBL" id="CH471058">
    <property type="protein sequence ID" value="EAX11111.1"/>
    <property type="molecule type" value="Genomic_DNA"/>
</dbReference>
<dbReference type="EMBL" id="CH471058">
    <property type="protein sequence ID" value="EAX11112.1"/>
    <property type="molecule type" value="Genomic_DNA"/>
</dbReference>
<dbReference type="EMBL" id="CH471058">
    <property type="protein sequence ID" value="EAX11113.1"/>
    <property type="molecule type" value="Genomic_DNA"/>
</dbReference>
<dbReference type="EMBL" id="BC026175">
    <property type="protein sequence ID" value="AAH26175.1"/>
    <property type="molecule type" value="mRNA"/>
</dbReference>
<dbReference type="EMBL" id="BC107698">
    <property type="protein sequence ID" value="AAI07699.1"/>
    <property type="molecule type" value="mRNA"/>
</dbReference>
<dbReference type="EMBL" id="BC130335">
    <property type="protein sequence ID" value="AAI30336.1"/>
    <property type="molecule type" value="mRNA"/>
</dbReference>
<dbReference type="EMBL" id="BC130337">
    <property type="protein sequence ID" value="AAI30338.1"/>
    <property type="molecule type" value="mRNA"/>
</dbReference>
<dbReference type="EMBL" id="M31630">
    <property type="protein sequence ID" value="AAA35951.1"/>
    <property type="molecule type" value="mRNA"/>
</dbReference>
<dbReference type="CCDS" id="CCDS2262.1">
    <molecule id="P15336-1"/>
</dbReference>
<dbReference type="CCDS" id="CCDS58737.1">
    <molecule id="P15336-4"/>
</dbReference>
<dbReference type="CCDS" id="CCDS58738.1">
    <molecule id="P15336-5"/>
</dbReference>
<dbReference type="CCDS" id="CCDS58739.1">
    <molecule id="P15336-3"/>
</dbReference>
<dbReference type="PIR" id="S05380">
    <property type="entry name" value="S05380"/>
</dbReference>
<dbReference type="RefSeq" id="NP_001243019.1">
    <molecule id="P15336-1"/>
    <property type="nucleotide sequence ID" value="NM_001256090.2"/>
</dbReference>
<dbReference type="RefSeq" id="NP_001243020.1">
    <molecule id="P15336-5"/>
    <property type="nucleotide sequence ID" value="NM_001256091.2"/>
</dbReference>
<dbReference type="RefSeq" id="NP_001243021.1">
    <molecule id="P15336-4"/>
    <property type="nucleotide sequence ID" value="NM_001256092.2"/>
</dbReference>
<dbReference type="RefSeq" id="NP_001243022.1">
    <property type="nucleotide sequence ID" value="NM_001256093.1"/>
</dbReference>
<dbReference type="RefSeq" id="NP_001243023.1">
    <molecule id="P15336-3"/>
    <property type="nucleotide sequence ID" value="NM_001256094.2"/>
</dbReference>
<dbReference type="RefSeq" id="NP_001871.2">
    <molecule id="P15336-1"/>
    <property type="nucleotide sequence ID" value="NM_001880.3"/>
</dbReference>
<dbReference type="PDB" id="1BHI">
    <property type="method" value="NMR"/>
    <property type="chains" value="A=19-56"/>
</dbReference>
<dbReference type="PDB" id="1T2K">
    <property type="method" value="X-ray"/>
    <property type="resolution" value="3.00 A"/>
    <property type="chains" value="D=354-414"/>
</dbReference>
<dbReference type="PDB" id="4H36">
    <property type="method" value="X-ray"/>
    <property type="resolution" value="3.00 A"/>
    <property type="chains" value="B=48-55"/>
</dbReference>
<dbReference type="PDB" id="6ZQS">
    <property type="method" value="X-ray"/>
    <property type="resolution" value="1.95 A"/>
    <property type="chains" value="B=83-102"/>
</dbReference>
<dbReference type="PDB" id="6ZR5">
    <property type="method" value="X-ray"/>
    <property type="resolution" value="2.70 A"/>
    <property type="chains" value="C/D=20-58"/>
</dbReference>
<dbReference type="PDBsum" id="1BHI"/>
<dbReference type="PDBsum" id="1T2K"/>
<dbReference type="PDBsum" id="4H36"/>
<dbReference type="PDBsum" id="6ZQS"/>
<dbReference type="PDBsum" id="6ZR5"/>
<dbReference type="BMRB" id="P15336"/>
<dbReference type="SMR" id="P15336"/>
<dbReference type="BioGRID" id="107776">
    <property type="interactions" value="239"/>
</dbReference>
<dbReference type="ComplexPortal" id="CPX-6406">
    <property type="entry name" value="bZIP transcription factor complex, ATF2-ATF2"/>
</dbReference>
<dbReference type="ComplexPortal" id="CPX-6407">
    <property type="entry name" value="bZIP transcription factor complex, ATF2-ATF3"/>
</dbReference>
<dbReference type="ComplexPortal" id="CPX-6408">
    <property type="entry name" value="bZIP transcription factor complex, ATF2-ATF4"/>
</dbReference>
<dbReference type="ComplexPortal" id="CPX-6409">
    <property type="entry name" value="bZIP transcription factor complex, ATF2-ATF7"/>
</dbReference>
<dbReference type="ComplexPortal" id="CPX-6412">
    <property type="entry name" value="bZIP transcription factor complex, ATF2-BACH1"/>
</dbReference>
<dbReference type="ComplexPortal" id="CPX-6413">
    <property type="entry name" value="bZIP transcription factor complex, ATF2-BATF"/>
</dbReference>
<dbReference type="ComplexPortal" id="CPX-6414">
    <property type="entry name" value="bZIP transcription factor complex, ATF2-BATF3"/>
</dbReference>
<dbReference type="ComplexPortal" id="CPX-6415">
    <property type="entry name" value="bZIP transcription factor complex, ATF2-DDIT3"/>
</dbReference>
<dbReference type="ComplexPortal" id="CPX-6416">
    <property type="entry name" value="bZIP transcription factor complex, ATF2-FOS"/>
</dbReference>
<dbReference type="ComplexPortal" id="CPX-6417">
    <property type="entry name" value="bZIP transcription factor complex, ATF2-FOSL1"/>
</dbReference>
<dbReference type="ComplexPortal" id="CPX-6418">
    <property type="entry name" value="bZIP transcription factor complex, ATF2-FOSL2"/>
</dbReference>
<dbReference type="ComplexPortal" id="CPX-6419">
    <property type="entry name" value="bZIP transcription factor complex, ATF2-JDP2"/>
</dbReference>
<dbReference type="ComplexPortal" id="CPX-6420">
    <property type="entry name" value="bZIP transcription factor complex, ATF2-JUN"/>
</dbReference>
<dbReference type="ComplexPortal" id="CPX-6421">
    <property type="entry name" value="bZIP transcription factor complex, ATF2-JUNB"/>
</dbReference>
<dbReference type="ComplexPortal" id="CPX-6422">
    <property type="entry name" value="bZIP transcription factor complex, ATF2-JUND"/>
</dbReference>
<dbReference type="CORUM" id="P15336"/>
<dbReference type="DIP" id="DIP-632N"/>
<dbReference type="ELM" id="P15336"/>
<dbReference type="FunCoup" id="P15336">
    <property type="interactions" value="6112"/>
</dbReference>
<dbReference type="IntAct" id="P15336">
    <property type="interactions" value="230"/>
</dbReference>
<dbReference type="MINT" id="P15336"/>
<dbReference type="STRING" id="9606.ENSP00000264110"/>
<dbReference type="ChEMBL" id="CHEMBL5291557"/>
<dbReference type="DrugBank" id="DB00852">
    <property type="generic name" value="Pseudoephedrine"/>
</dbReference>
<dbReference type="MoonProt" id="P15336"/>
<dbReference type="GlyCosmos" id="P15336">
    <property type="glycosylation" value="9 sites, 2 glycans"/>
</dbReference>
<dbReference type="GlyGen" id="P15336">
    <property type="glycosylation" value="16 sites, 2 O-linked glycans (15 sites)"/>
</dbReference>
<dbReference type="iPTMnet" id="P15336"/>
<dbReference type="PhosphoSitePlus" id="P15336"/>
<dbReference type="BioMuta" id="ATF2"/>
<dbReference type="DMDM" id="215274241"/>
<dbReference type="jPOST" id="P15336"/>
<dbReference type="MassIVE" id="P15336"/>
<dbReference type="PaxDb" id="9606-ENSP00000264110"/>
<dbReference type="PeptideAtlas" id="P15336"/>
<dbReference type="ProteomicsDB" id="34276"/>
<dbReference type="ProteomicsDB" id="53131">
    <molecule id="P15336-1"/>
</dbReference>
<dbReference type="ProteomicsDB" id="53132">
    <molecule id="P15336-2"/>
</dbReference>
<dbReference type="ProteomicsDB" id="61652"/>
<dbReference type="ProteomicsDB" id="650"/>
<dbReference type="ProteomicsDB" id="651"/>
<dbReference type="ProteomicsDB" id="73911"/>
<dbReference type="ProteomicsDB" id="77009"/>
<dbReference type="Pumba" id="P15336"/>
<dbReference type="Antibodypedia" id="3529">
    <property type="antibodies" value="2489 antibodies from 51 providers"/>
</dbReference>
<dbReference type="DNASU" id="1386"/>
<dbReference type="Ensembl" id="ENST00000264110.7">
    <molecule id="P15336-1"/>
    <property type="protein sequence ID" value="ENSP00000264110.2"/>
    <property type="gene ID" value="ENSG00000115966.18"/>
</dbReference>
<dbReference type="Ensembl" id="ENST00000345739.9">
    <molecule id="P15336-4"/>
    <property type="protein sequence ID" value="ENSP00000340576.5"/>
    <property type="gene ID" value="ENSG00000115966.18"/>
</dbReference>
<dbReference type="Ensembl" id="ENST00000392544.5">
    <molecule id="P15336-1"/>
    <property type="protein sequence ID" value="ENSP00000376327.1"/>
    <property type="gene ID" value="ENSG00000115966.18"/>
</dbReference>
<dbReference type="Ensembl" id="ENST00000409499.5">
    <molecule id="P15336-8"/>
    <property type="protein sequence ID" value="ENSP00000386282.1"/>
    <property type="gene ID" value="ENSG00000115966.18"/>
</dbReference>
<dbReference type="Ensembl" id="ENST00000409635.5">
    <molecule id="P15336-4"/>
    <property type="protein sequence ID" value="ENSP00000387093.1"/>
    <property type="gene ID" value="ENSG00000115966.18"/>
</dbReference>
<dbReference type="Ensembl" id="ENST00000409833.5">
    <molecule id="P15336-3"/>
    <property type="protein sequence ID" value="ENSP00000386526.1"/>
    <property type="gene ID" value="ENSG00000115966.18"/>
</dbReference>
<dbReference type="Ensembl" id="ENST00000426833.7">
    <molecule id="P15336-5"/>
    <property type="protein sequence ID" value="ENSP00000407911.3"/>
    <property type="gene ID" value="ENSG00000115966.18"/>
</dbReference>
<dbReference type="GeneID" id="1386"/>
<dbReference type="KEGG" id="hsa:1386"/>
<dbReference type="MANE-Select" id="ENST00000264110.7">
    <property type="protein sequence ID" value="ENSP00000264110.2"/>
    <property type="RefSeq nucleotide sequence ID" value="NM_001880.4"/>
    <property type="RefSeq protein sequence ID" value="NP_001871.2"/>
</dbReference>
<dbReference type="UCSC" id="uc002ujk.5">
    <molecule id="P15336-1"/>
    <property type="organism name" value="human"/>
</dbReference>
<dbReference type="AGR" id="HGNC:784"/>
<dbReference type="CTD" id="1386"/>
<dbReference type="DisGeNET" id="1386"/>
<dbReference type="GeneCards" id="ATF2"/>
<dbReference type="HGNC" id="HGNC:784">
    <property type="gene designation" value="ATF2"/>
</dbReference>
<dbReference type="HPA" id="ENSG00000115966">
    <property type="expression patterns" value="Low tissue specificity"/>
</dbReference>
<dbReference type="MIM" id="123811">
    <property type="type" value="gene"/>
</dbReference>
<dbReference type="neXtProt" id="NX_P15336"/>
<dbReference type="OpenTargets" id="ENSG00000115966"/>
<dbReference type="PharmGKB" id="PA25084"/>
<dbReference type="VEuPathDB" id="HostDB:ENSG00000115966"/>
<dbReference type="eggNOG" id="KOG1414">
    <property type="taxonomic scope" value="Eukaryota"/>
</dbReference>
<dbReference type="GeneTree" id="ENSGT00940000156582"/>
<dbReference type="HOGENOM" id="CLU_1980813_0_0_1"/>
<dbReference type="InParanoid" id="P15336"/>
<dbReference type="OMA" id="YQTADKD"/>
<dbReference type="OrthoDB" id="295274at2759"/>
<dbReference type="PAN-GO" id="P15336">
    <property type="GO annotations" value="3 GO annotations based on evolutionary models"/>
</dbReference>
<dbReference type="PhylomeDB" id="P15336"/>
<dbReference type="PathwayCommons" id="P15336"/>
<dbReference type="Reactome" id="R-HSA-2151201">
    <property type="pathway name" value="Transcriptional activation of mitochondrial biogenesis"/>
</dbReference>
<dbReference type="Reactome" id="R-HSA-3214847">
    <property type="pathway name" value="HATs acetylate histones"/>
</dbReference>
<dbReference type="Reactome" id="R-HSA-400253">
    <property type="pathway name" value="Circadian Clock"/>
</dbReference>
<dbReference type="Reactome" id="R-HSA-450341">
    <property type="pathway name" value="Activation of the AP-1 family of transcription factors"/>
</dbReference>
<dbReference type="Reactome" id="R-HSA-6796648">
    <property type="pathway name" value="TP53 Regulates Transcription of DNA Repair Genes"/>
</dbReference>
<dbReference type="Reactome" id="R-HSA-8943724">
    <property type="pathway name" value="Regulation of PTEN gene transcription"/>
</dbReference>
<dbReference type="Reactome" id="R-HSA-9018519">
    <property type="pathway name" value="Estrogen-dependent gene expression"/>
</dbReference>
<dbReference type="Reactome" id="R-HSA-9031628">
    <property type="pathway name" value="NGF-stimulated transcription"/>
</dbReference>
<dbReference type="Reactome" id="R-HSA-9633012">
    <property type="pathway name" value="Response of EIF2AK4 (GCN2) to amino acid deficiency"/>
</dbReference>
<dbReference type="Reactome" id="R-HSA-9707616">
    <property type="pathway name" value="Heme signaling"/>
</dbReference>
<dbReference type="SignaLink" id="P15336"/>
<dbReference type="SIGNOR" id="P15336"/>
<dbReference type="BioGRID-ORCS" id="1386">
    <property type="hits" value="20 hits in 1196 CRISPR screens"/>
</dbReference>
<dbReference type="ChiTaRS" id="ATF2">
    <property type="organism name" value="human"/>
</dbReference>
<dbReference type="EvolutionaryTrace" id="P15336"/>
<dbReference type="GeneWiki" id="Activating_transcription_factor_2"/>
<dbReference type="GenomeRNAi" id="1386"/>
<dbReference type="Pharos" id="P15336">
    <property type="development level" value="Tbio"/>
</dbReference>
<dbReference type="PRO" id="PR:P15336"/>
<dbReference type="Proteomes" id="UP000005640">
    <property type="component" value="Chromosome 2"/>
</dbReference>
<dbReference type="RNAct" id="P15336">
    <property type="molecule type" value="protein"/>
</dbReference>
<dbReference type="Bgee" id="ENSG00000115966">
    <property type="expression patterns" value="Expressed in endothelial cell and 212 other cell types or tissues"/>
</dbReference>
<dbReference type="ExpressionAtlas" id="P15336">
    <property type="expression patterns" value="baseline and differential"/>
</dbReference>
<dbReference type="GO" id="GO:0000785">
    <property type="term" value="C:chromatin"/>
    <property type="evidence" value="ECO:0000314"/>
    <property type="project" value="ARUK-UCL"/>
</dbReference>
<dbReference type="GO" id="GO:0005737">
    <property type="term" value="C:cytoplasm"/>
    <property type="evidence" value="ECO:0000314"/>
    <property type="project" value="UniProtKB"/>
</dbReference>
<dbReference type="GO" id="GO:1902562">
    <property type="term" value="C:H4 histone acetyltransferase complex"/>
    <property type="evidence" value="ECO:0000314"/>
    <property type="project" value="ARUK-UCL"/>
</dbReference>
<dbReference type="GO" id="GO:0005741">
    <property type="term" value="C:mitochondrial outer membrane"/>
    <property type="evidence" value="ECO:0000314"/>
    <property type="project" value="UniProtKB"/>
</dbReference>
<dbReference type="GO" id="GO:0005654">
    <property type="term" value="C:nucleoplasm"/>
    <property type="evidence" value="ECO:0000314"/>
    <property type="project" value="HPA"/>
</dbReference>
<dbReference type="GO" id="GO:0005634">
    <property type="term" value="C:nucleus"/>
    <property type="evidence" value="ECO:0000314"/>
    <property type="project" value="UniProtKB"/>
</dbReference>
<dbReference type="GO" id="GO:0090575">
    <property type="term" value="C:RNA polymerase II transcription regulator complex"/>
    <property type="evidence" value="ECO:0000353"/>
    <property type="project" value="ComplexPortal"/>
</dbReference>
<dbReference type="GO" id="GO:0035861">
    <property type="term" value="C:site of double-strand break"/>
    <property type="evidence" value="ECO:0000314"/>
    <property type="project" value="UniProtKB"/>
</dbReference>
<dbReference type="GO" id="GO:0035497">
    <property type="term" value="F:cAMP response element binding"/>
    <property type="evidence" value="ECO:0000314"/>
    <property type="project" value="BHF-UCL"/>
</dbReference>
<dbReference type="GO" id="GO:0008140">
    <property type="term" value="F:cAMP response element binding protein binding"/>
    <property type="evidence" value="ECO:0000314"/>
    <property type="project" value="BHF-UCL"/>
</dbReference>
<dbReference type="GO" id="GO:0000987">
    <property type="term" value="F:cis-regulatory region sequence-specific DNA binding"/>
    <property type="evidence" value="ECO:0000314"/>
    <property type="project" value="UniProtKB"/>
</dbReference>
<dbReference type="GO" id="GO:0001228">
    <property type="term" value="F:DNA-binding transcription activator activity, RNA polymerase II-specific"/>
    <property type="evidence" value="ECO:0000314"/>
    <property type="project" value="NTNU_SB"/>
</dbReference>
<dbReference type="GO" id="GO:0003700">
    <property type="term" value="F:DNA-binding transcription factor activity"/>
    <property type="evidence" value="ECO:0000314"/>
    <property type="project" value="MGI"/>
</dbReference>
<dbReference type="GO" id="GO:0000981">
    <property type="term" value="F:DNA-binding transcription factor activity, RNA polymerase II-specific"/>
    <property type="evidence" value="ECO:0000247"/>
    <property type="project" value="NTNU_SB"/>
</dbReference>
<dbReference type="GO" id="GO:0004402">
    <property type="term" value="F:histone acetyltransferase activity"/>
    <property type="evidence" value="ECO:0000304"/>
    <property type="project" value="Reactome"/>
</dbReference>
<dbReference type="GO" id="GO:0044013">
    <property type="term" value="F:histone H2B acetyltransferase activity"/>
    <property type="evidence" value="ECO:0000314"/>
    <property type="project" value="ARUK-UCL"/>
</dbReference>
<dbReference type="GO" id="GO:0010485">
    <property type="term" value="F:histone H4 acetyltransferase activity"/>
    <property type="evidence" value="ECO:0000314"/>
    <property type="project" value="ARUK-UCL"/>
</dbReference>
<dbReference type="GO" id="GO:0042802">
    <property type="term" value="F:identical protein binding"/>
    <property type="evidence" value="ECO:0000353"/>
    <property type="project" value="IntAct"/>
</dbReference>
<dbReference type="GO" id="GO:0043522">
    <property type="term" value="F:leucine zipper domain binding"/>
    <property type="evidence" value="ECO:0007669"/>
    <property type="project" value="Ensembl"/>
</dbReference>
<dbReference type="GO" id="GO:1990841">
    <property type="term" value="F:promoter-specific chromatin binding"/>
    <property type="evidence" value="ECO:0000314"/>
    <property type="project" value="MGI"/>
</dbReference>
<dbReference type="GO" id="GO:0046982">
    <property type="term" value="F:protein heterodimerization activity"/>
    <property type="evidence" value="ECO:0007669"/>
    <property type="project" value="Ensembl"/>
</dbReference>
<dbReference type="GO" id="GO:0042803">
    <property type="term" value="F:protein homodimerization activity"/>
    <property type="evidence" value="ECO:0007669"/>
    <property type="project" value="Ensembl"/>
</dbReference>
<dbReference type="GO" id="GO:0019901">
    <property type="term" value="F:protein kinase binding"/>
    <property type="evidence" value="ECO:0000353"/>
    <property type="project" value="UniProtKB"/>
</dbReference>
<dbReference type="GO" id="GO:0000978">
    <property type="term" value="F:RNA polymerase II cis-regulatory region sequence-specific DNA binding"/>
    <property type="evidence" value="ECO:0000314"/>
    <property type="project" value="BHF-UCL"/>
</dbReference>
<dbReference type="GO" id="GO:0000977">
    <property type="term" value="F:RNA polymerase II transcription regulatory region sequence-specific DNA binding"/>
    <property type="evidence" value="ECO:0000315"/>
    <property type="project" value="NTNU_SB"/>
</dbReference>
<dbReference type="GO" id="GO:0061629">
    <property type="term" value="F:RNA polymerase II-specific DNA-binding transcription factor binding"/>
    <property type="evidence" value="ECO:0000353"/>
    <property type="project" value="BHF-UCL"/>
</dbReference>
<dbReference type="GO" id="GO:1990837">
    <property type="term" value="F:sequence-specific double-stranded DNA binding"/>
    <property type="evidence" value="ECO:0000314"/>
    <property type="project" value="ARUK-UCL"/>
</dbReference>
<dbReference type="GO" id="GO:0008270">
    <property type="term" value="F:zinc ion binding"/>
    <property type="evidence" value="ECO:0007669"/>
    <property type="project" value="UniProtKB-KW"/>
</dbReference>
<dbReference type="GO" id="GO:0021742">
    <property type="term" value="P:abducens nucleus development"/>
    <property type="evidence" value="ECO:0007669"/>
    <property type="project" value="Ensembl"/>
</dbReference>
<dbReference type="GO" id="GO:0060612">
    <property type="term" value="P:adipose tissue development"/>
    <property type="evidence" value="ECO:0007669"/>
    <property type="project" value="Ensembl"/>
</dbReference>
<dbReference type="GO" id="GO:1902742">
    <property type="term" value="P:apoptotic process involved in development"/>
    <property type="evidence" value="ECO:0007669"/>
    <property type="project" value="Ensembl"/>
</dbReference>
<dbReference type="GO" id="GO:0030509">
    <property type="term" value="P:BMP signaling pathway"/>
    <property type="evidence" value="ECO:0007669"/>
    <property type="project" value="Ensembl"/>
</dbReference>
<dbReference type="GO" id="GO:0003360">
    <property type="term" value="P:brainstem development"/>
    <property type="evidence" value="ECO:0007669"/>
    <property type="project" value="Ensembl"/>
</dbReference>
<dbReference type="GO" id="GO:0072740">
    <property type="term" value="P:cellular response to anisomycin"/>
    <property type="evidence" value="ECO:0007669"/>
    <property type="project" value="Ensembl"/>
</dbReference>
<dbReference type="GO" id="GO:1990253">
    <property type="term" value="P:cellular response to leucine starvation"/>
    <property type="evidence" value="ECO:0000314"/>
    <property type="project" value="MGI"/>
</dbReference>
<dbReference type="GO" id="GO:0034599">
    <property type="term" value="P:cellular response to oxidative stress"/>
    <property type="evidence" value="ECO:0007669"/>
    <property type="project" value="Ensembl"/>
</dbReference>
<dbReference type="GO" id="GO:0098586">
    <property type="term" value="P:cellular response to virus"/>
    <property type="evidence" value="ECO:0007669"/>
    <property type="project" value="Ensembl"/>
</dbReference>
<dbReference type="GO" id="GO:0060245">
    <property type="term" value="P:detection of cell density"/>
    <property type="evidence" value="ECO:0007669"/>
    <property type="project" value="Ensembl"/>
</dbReference>
<dbReference type="GO" id="GO:0006974">
    <property type="term" value="P:DNA damage response"/>
    <property type="evidence" value="ECO:0000314"/>
    <property type="project" value="UniProtKB"/>
</dbReference>
<dbReference type="GO" id="GO:0021754">
    <property type="term" value="P:facial nucleus development"/>
    <property type="evidence" value="ECO:0007669"/>
    <property type="project" value="Ensembl"/>
</dbReference>
<dbReference type="GO" id="GO:0003418">
    <property type="term" value="P:growth plate cartilage chondrocyte differentiation"/>
    <property type="evidence" value="ECO:0007669"/>
    <property type="project" value="Ensembl"/>
</dbReference>
<dbReference type="GO" id="GO:0003419">
    <property type="term" value="P:growth plate cartilage chondrocyte proliferation"/>
    <property type="evidence" value="ECO:0007669"/>
    <property type="project" value="Ensembl"/>
</dbReference>
<dbReference type="GO" id="GO:0002244">
    <property type="term" value="P:hematopoietic progenitor cell differentiation"/>
    <property type="evidence" value="ECO:0007669"/>
    <property type="project" value="Ensembl"/>
</dbReference>
<dbReference type="GO" id="GO:0097284">
    <property type="term" value="P:hepatocyte apoptotic process"/>
    <property type="evidence" value="ECO:0007669"/>
    <property type="project" value="Ensembl"/>
</dbReference>
<dbReference type="GO" id="GO:0021743">
    <property type="term" value="P:hypoglossal nucleus development"/>
    <property type="evidence" value="ECO:0007669"/>
    <property type="project" value="Ensembl"/>
</dbReference>
<dbReference type="GO" id="GO:0001701">
    <property type="term" value="P:in utero embryonic development"/>
    <property type="evidence" value="ECO:0007669"/>
    <property type="project" value="Ensembl"/>
</dbReference>
<dbReference type="GO" id="GO:1990144">
    <property type="term" value="P:intrinsic apoptotic signaling pathway in response to hypoxia"/>
    <property type="evidence" value="ECO:0007669"/>
    <property type="project" value="Ensembl"/>
</dbReference>
<dbReference type="GO" id="GO:0007254">
    <property type="term" value="P:JNK cascade"/>
    <property type="evidence" value="ECO:0007669"/>
    <property type="project" value="Ensembl"/>
</dbReference>
<dbReference type="GO" id="GO:0006629">
    <property type="term" value="P:lipid metabolic process"/>
    <property type="evidence" value="ECO:0007669"/>
    <property type="project" value="Ensembl"/>
</dbReference>
<dbReference type="GO" id="GO:0001889">
    <property type="term" value="P:liver development"/>
    <property type="evidence" value="ECO:0007669"/>
    <property type="project" value="Ensembl"/>
</dbReference>
<dbReference type="GO" id="GO:0031573">
    <property type="term" value="P:mitotic intra-S DNA damage checkpoint signaling"/>
    <property type="evidence" value="ECO:0000315"/>
    <property type="project" value="UniProtKB"/>
</dbReference>
<dbReference type="GO" id="GO:0097049">
    <property type="term" value="P:motor neuron apoptotic process"/>
    <property type="evidence" value="ECO:0007669"/>
    <property type="project" value="Ensembl"/>
</dbReference>
<dbReference type="GO" id="GO:0042789">
    <property type="term" value="P:mRNA transcription by RNA polymerase II"/>
    <property type="evidence" value="ECO:0007669"/>
    <property type="project" value="Ensembl"/>
</dbReference>
<dbReference type="GO" id="GO:0016525">
    <property type="term" value="P:negative regulation of angiogenesis"/>
    <property type="evidence" value="ECO:0000315"/>
    <property type="project" value="BHF-UCL"/>
</dbReference>
<dbReference type="GO" id="GO:0000122">
    <property type="term" value="P:negative regulation of transcription by RNA polymerase II"/>
    <property type="evidence" value="ECO:0000269"/>
    <property type="project" value="ComplexPortal"/>
</dbReference>
<dbReference type="GO" id="GO:0060052">
    <property type="term" value="P:neurofilament cytoskeleton organization"/>
    <property type="evidence" value="ECO:0007669"/>
    <property type="project" value="Ensembl"/>
</dbReference>
<dbReference type="GO" id="GO:0001865">
    <property type="term" value="P:NK T cell differentiation"/>
    <property type="evidence" value="ECO:0007669"/>
    <property type="project" value="Ensembl"/>
</dbReference>
<dbReference type="GO" id="GO:0003151">
    <property type="term" value="P:outflow tract morphogenesis"/>
    <property type="evidence" value="ECO:0007669"/>
    <property type="project" value="Ensembl"/>
</dbReference>
<dbReference type="GO" id="GO:0038066">
    <property type="term" value="P:p38MAPK cascade"/>
    <property type="evidence" value="ECO:0007669"/>
    <property type="project" value="Ensembl"/>
</dbReference>
<dbReference type="GO" id="GO:0018107">
    <property type="term" value="P:peptidyl-threonine phosphorylation"/>
    <property type="evidence" value="ECO:0000314"/>
    <property type="project" value="MGI"/>
</dbReference>
<dbReference type="GO" id="GO:0110024">
    <property type="term" value="P:positive regulation of cardiac muscle myoblast proliferation"/>
    <property type="evidence" value="ECO:0000314"/>
    <property type="project" value="BHF-UCL"/>
</dbReference>
<dbReference type="GO" id="GO:0051091">
    <property type="term" value="P:positive regulation of DNA-binding transcription factor activity"/>
    <property type="evidence" value="ECO:0000315"/>
    <property type="project" value="UniProtKB"/>
</dbReference>
<dbReference type="GO" id="GO:0010628">
    <property type="term" value="P:positive regulation of gene expression"/>
    <property type="evidence" value="ECO:0000315"/>
    <property type="project" value="BHF-UCL"/>
</dbReference>
<dbReference type="GO" id="GO:1902110">
    <property type="term" value="P:positive regulation of mitochondrial membrane permeability involved in apoptotic process"/>
    <property type="evidence" value="ECO:0000315"/>
    <property type="project" value="UniProtKB"/>
</dbReference>
<dbReference type="GO" id="GO:0045944">
    <property type="term" value="P:positive regulation of transcription by RNA polymerase II"/>
    <property type="evidence" value="ECO:0000314"/>
    <property type="project" value="NTNU_SB"/>
</dbReference>
<dbReference type="GO" id="GO:0032915">
    <property type="term" value="P:positive regulation of transforming growth factor beta2 production"/>
    <property type="evidence" value="ECO:0007669"/>
    <property type="project" value="Ensembl"/>
</dbReference>
<dbReference type="GO" id="GO:0006606">
    <property type="term" value="P:protein import into nucleus"/>
    <property type="evidence" value="ECO:0007669"/>
    <property type="project" value="Ensembl"/>
</dbReference>
<dbReference type="GO" id="GO:0006355">
    <property type="term" value="P:regulation of DNA-templated transcription"/>
    <property type="evidence" value="ECO:0000315"/>
    <property type="project" value="UniProtKB"/>
</dbReference>
<dbReference type="GO" id="GO:0006357">
    <property type="term" value="P:regulation of transcription by RNA polymerase II"/>
    <property type="evidence" value="ECO:0000314"/>
    <property type="project" value="BHF-UCL"/>
</dbReference>
<dbReference type="GO" id="GO:0006970">
    <property type="term" value="P:response to osmotic stress"/>
    <property type="evidence" value="ECO:0000314"/>
    <property type="project" value="UniProtKB"/>
</dbReference>
<dbReference type="GO" id="GO:0045815">
    <property type="term" value="P:transcription initiation-coupled chromatin remodeling"/>
    <property type="evidence" value="ECO:0000314"/>
    <property type="project" value="ARUK-UCL"/>
</dbReference>
<dbReference type="GO" id="GO:0007033">
    <property type="term" value="P:vacuole organization"/>
    <property type="evidence" value="ECO:0007669"/>
    <property type="project" value="Ensembl"/>
</dbReference>
<dbReference type="GO" id="GO:0050872">
    <property type="term" value="P:white fat cell differentiation"/>
    <property type="evidence" value="ECO:0007669"/>
    <property type="project" value="Ensembl"/>
</dbReference>
<dbReference type="CDD" id="cd14687">
    <property type="entry name" value="bZIP_ATF2"/>
    <property type="match status" value="1"/>
</dbReference>
<dbReference type="CDD" id="cd12192">
    <property type="entry name" value="GCN4_cent"/>
    <property type="match status" value="1"/>
</dbReference>
<dbReference type="FunFam" id="1.20.5.170:FF:000010">
    <property type="entry name" value="Cyclic AMP-dependent transcription factor ATF-2"/>
    <property type="match status" value="1"/>
</dbReference>
<dbReference type="Gene3D" id="1.20.5.170">
    <property type="match status" value="1"/>
</dbReference>
<dbReference type="Gene3D" id="3.30.160.60">
    <property type="entry name" value="Classic Zinc Finger"/>
    <property type="match status" value="1"/>
</dbReference>
<dbReference type="IDEAL" id="IID00441"/>
<dbReference type="InterPro" id="IPR004827">
    <property type="entry name" value="bZIP"/>
</dbReference>
<dbReference type="InterPro" id="IPR046347">
    <property type="entry name" value="bZIP_sf"/>
</dbReference>
<dbReference type="InterPro" id="IPR051027">
    <property type="entry name" value="bZIP_transcription_factors"/>
</dbReference>
<dbReference type="InterPro" id="IPR016378">
    <property type="entry name" value="TF_CRE-BP1-typ"/>
</dbReference>
<dbReference type="InterPro" id="IPR036236">
    <property type="entry name" value="Znf_C2H2_sf"/>
</dbReference>
<dbReference type="InterPro" id="IPR013087">
    <property type="entry name" value="Znf_C2H2_type"/>
</dbReference>
<dbReference type="PANTHER" id="PTHR19304">
    <property type="entry name" value="CYCLIC-AMP RESPONSE ELEMENT BINDING PROTEIN"/>
    <property type="match status" value="1"/>
</dbReference>
<dbReference type="Pfam" id="PF00170">
    <property type="entry name" value="bZIP_1"/>
    <property type="match status" value="1"/>
</dbReference>
<dbReference type="PIRSF" id="PIRSF003153">
    <property type="entry name" value="ATF2_CRE-BP1"/>
    <property type="match status" value="1"/>
</dbReference>
<dbReference type="SMART" id="SM00338">
    <property type="entry name" value="BRLZ"/>
    <property type="match status" value="1"/>
</dbReference>
<dbReference type="SUPFAM" id="SSF57667">
    <property type="entry name" value="beta-beta-alpha zinc fingers"/>
    <property type="match status" value="1"/>
</dbReference>
<dbReference type="SUPFAM" id="SSF57959">
    <property type="entry name" value="Leucine zipper domain"/>
    <property type="match status" value="1"/>
</dbReference>
<dbReference type="PROSITE" id="PS50217">
    <property type="entry name" value="BZIP"/>
    <property type="match status" value="1"/>
</dbReference>
<dbReference type="PROSITE" id="PS00036">
    <property type="entry name" value="BZIP_BASIC"/>
    <property type="match status" value="1"/>
</dbReference>
<dbReference type="PROSITE" id="PS00028">
    <property type="entry name" value="ZINC_FINGER_C2H2_1"/>
    <property type="match status" value="1"/>
</dbReference>
<dbReference type="PROSITE" id="PS50157">
    <property type="entry name" value="ZINC_FINGER_C2H2_2"/>
    <property type="match status" value="1"/>
</dbReference>
<proteinExistence type="evidence at protein level"/>
<reference key="1">
    <citation type="journal article" date="1989" name="EMBO J.">
        <title>Leucine zipper structure of the protein CRE-BP1 binding to the cyclic AMP response element in brain.</title>
        <authorList>
            <person name="Maekawa T."/>
            <person name="Sakura H."/>
            <person name="Kanei-Ishii C."/>
            <person name="Sudo T."/>
            <person name="Yoshimura T."/>
            <person name="Fujisawa J."/>
            <person name="Yoshida M."/>
            <person name="Ishii S."/>
        </authorList>
    </citation>
    <scope>NUCLEOTIDE SEQUENCE [MRNA] (ISOFORM 1)</scope>
    <source>
        <tissue>Fetal brain</tissue>
    </source>
</reference>
<reference key="2">
    <citation type="journal article" date="1997" name="J. Immunol.">
        <title>Identification of a novel, spliced variant of CREB that is preferentially expressed in the thymus.</title>
        <authorList>
            <person name="Yang L."/>
            <person name="Lanier E.R."/>
            <person name="Kraig E."/>
        </authorList>
    </citation>
    <scope>NUCLEOTIDE SEQUENCE [MRNA] (ISOFORM 2)</scope>
    <source>
        <tissue>Thymus</tissue>
    </source>
</reference>
<reference key="3">
    <citation type="journal article" date="2002" name="J. Clin. Endocrinol. Metab.">
        <title>Characterization and functional analysis of cAMP response element modulator protein and activating transcription factor 2 (ATF2) isoforms in the human myometrium during pregnancy and labor: identification of a novel ATF2 species with potent transactivation properties.</title>
        <authorList>
            <person name="Bailey J."/>
            <person name="Phillips R.J."/>
            <person name="Pollard A.J."/>
            <person name="Gilmore K."/>
            <person name="Robson S.C."/>
            <person name="Europe-Finner G.N."/>
        </authorList>
    </citation>
    <scope>NUCLEOTIDE SEQUENCE [MRNA] (ISOFORM 8)</scope>
    <source>
        <tissue>Myometrium</tissue>
    </source>
</reference>
<reference key="4">
    <citation type="submission" date="2005-04" db="EMBL/GenBank/DDBJ databases">
        <title>Homo sapiens activating transcription factor 2 (ATF2) mRNA splice variant.</title>
        <authorList>
            <person name="von Hippel A.C."/>
        </authorList>
    </citation>
    <scope>NUCLEOTIDE SEQUENCE [MRNA] (ISOFORMS 1; 5; 6 AND 7)</scope>
</reference>
<reference key="5">
    <citation type="journal article" date="2005" name="Nature">
        <title>Generation and annotation of the DNA sequences of human chromosomes 2 and 4.</title>
        <authorList>
            <person name="Hillier L.W."/>
            <person name="Graves T.A."/>
            <person name="Fulton R.S."/>
            <person name="Fulton L.A."/>
            <person name="Pepin K.H."/>
            <person name="Minx P."/>
            <person name="Wagner-McPherson C."/>
            <person name="Layman D."/>
            <person name="Wylie K."/>
            <person name="Sekhon M."/>
            <person name="Becker M.C."/>
            <person name="Fewell G.A."/>
            <person name="Delehaunty K.D."/>
            <person name="Miner T.L."/>
            <person name="Nash W.E."/>
            <person name="Kremitzki C."/>
            <person name="Oddy L."/>
            <person name="Du H."/>
            <person name="Sun H."/>
            <person name="Bradshaw-Cordum H."/>
            <person name="Ali J."/>
            <person name="Carter J."/>
            <person name="Cordes M."/>
            <person name="Harris A."/>
            <person name="Isak A."/>
            <person name="van Brunt A."/>
            <person name="Nguyen C."/>
            <person name="Du F."/>
            <person name="Courtney L."/>
            <person name="Kalicki J."/>
            <person name="Ozersky P."/>
            <person name="Abbott S."/>
            <person name="Armstrong J."/>
            <person name="Belter E.A."/>
            <person name="Caruso L."/>
            <person name="Cedroni M."/>
            <person name="Cotton M."/>
            <person name="Davidson T."/>
            <person name="Desai A."/>
            <person name="Elliott G."/>
            <person name="Erb T."/>
            <person name="Fronick C."/>
            <person name="Gaige T."/>
            <person name="Haakenson W."/>
            <person name="Haglund K."/>
            <person name="Holmes A."/>
            <person name="Harkins R."/>
            <person name="Kim K."/>
            <person name="Kruchowski S.S."/>
            <person name="Strong C.M."/>
            <person name="Grewal N."/>
            <person name="Goyea E."/>
            <person name="Hou S."/>
            <person name="Levy A."/>
            <person name="Martinka S."/>
            <person name="Mead K."/>
            <person name="McLellan M.D."/>
            <person name="Meyer R."/>
            <person name="Randall-Maher J."/>
            <person name="Tomlinson C."/>
            <person name="Dauphin-Kohlberg S."/>
            <person name="Kozlowicz-Reilly A."/>
            <person name="Shah N."/>
            <person name="Swearengen-Shahid S."/>
            <person name="Snider J."/>
            <person name="Strong J.T."/>
            <person name="Thompson J."/>
            <person name="Yoakum M."/>
            <person name="Leonard S."/>
            <person name="Pearman C."/>
            <person name="Trani L."/>
            <person name="Radionenko M."/>
            <person name="Waligorski J.E."/>
            <person name="Wang C."/>
            <person name="Rock S.M."/>
            <person name="Tin-Wollam A.-M."/>
            <person name="Maupin R."/>
            <person name="Latreille P."/>
            <person name="Wendl M.C."/>
            <person name="Yang S.-P."/>
            <person name="Pohl C."/>
            <person name="Wallis J.W."/>
            <person name="Spieth J."/>
            <person name="Bieri T.A."/>
            <person name="Berkowicz N."/>
            <person name="Nelson J.O."/>
            <person name="Osborne J."/>
            <person name="Ding L."/>
            <person name="Meyer R."/>
            <person name="Sabo A."/>
            <person name="Shotland Y."/>
            <person name="Sinha P."/>
            <person name="Wohldmann P.E."/>
            <person name="Cook L.L."/>
            <person name="Hickenbotham M.T."/>
            <person name="Eldred J."/>
            <person name="Williams D."/>
            <person name="Jones T.A."/>
            <person name="She X."/>
            <person name="Ciccarelli F.D."/>
            <person name="Izaurralde E."/>
            <person name="Taylor J."/>
            <person name="Schmutz J."/>
            <person name="Myers R.M."/>
            <person name="Cox D.R."/>
            <person name="Huang X."/>
            <person name="McPherson J.D."/>
            <person name="Mardis E.R."/>
            <person name="Clifton S.W."/>
            <person name="Warren W.C."/>
            <person name="Chinwalla A.T."/>
            <person name="Eddy S.R."/>
            <person name="Marra M.A."/>
            <person name="Ovcharenko I."/>
            <person name="Furey T.S."/>
            <person name="Miller W."/>
            <person name="Eichler E.E."/>
            <person name="Bork P."/>
            <person name="Suyama M."/>
            <person name="Torrents D."/>
            <person name="Waterston R.H."/>
            <person name="Wilson R.K."/>
        </authorList>
    </citation>
    <scope>NUCLEOTIDE SEQUENCE [LARGE SCALE GENOMIC DNA]</scope>
</reference>
<reference key="6">
    <citation type="submission" date="2005-09" db="EMBL/GenBank/DDBJ databases">
        <authorList>
            <person name="Mural R.J."/>
            <person name="Istrail S."/>
            <person name="Sutton G.G."/>
            <person name="Florea L."/>
            <person name="Halpern A.L."/>
            <person name="Mobarry C.M."/>
            <person name="Lippert R."/>
            <person name="Walenz B."/>
            <person name="Shatkay H."/>
            <person name="Dew I."/>
            <person name="Miller J.R."/>
            <person name="Flanigan M.J."/>
            <person name="Edwards N.J."/>
            <person name="Bolanos R."/>
            <person name="Fasulo D."/>
            <person name="Halldorsson B.V."/>
            <person name="Hannenhalli S."/>
            <person name="Turner R."/>
            <person name="Yooseph S."/>
            <person name="Lu F."/>
            <person name="Nusskern D.R."/>
            <person name="Shue B.C."/>
            <person name="Zheng X.H."/>
            <person name="Zhong F."/>
            <person name="Delcher A.L."/>
            <person name="Huson D.H."/>
            <person name="Kravitz S.A."/>
            <person name="Mouchard L."/>
            <person name="Reinert K."/>
            <person name="Remington K.A."/>
            <person name="Clark A.G."/>
            <person name="Waterman M.S."/>
            <person name="Eichler E.E."/>
            <person name="Adams M.D."/>
            <person name="Hunkapiller M.W."/>
            <person name="Myers E.W."/>
            <person name="Venter J.C."/>
        </authorList>
    </citation>
    <scope>NUCLEOTIDE SEQUENCE [LARGE SCALE GENOMIC DNA]</scope>
</reference>
<reference key="7">
    <citation type="journal article" date="2004" name="Genome Res.">
        <title>The status, quality, and expansion of the NIH full-length cDNA project: the Mammalian Gene Collection (MGC).</title>
        <authorList>
            <consortium name="The MGC Project Team"/>
        </authorList>
    </citation>
    <scope>NUCLEOTIDE SEQUENCE [LARGE SCALE MRNA] (ISOFORMS 1; 3 AND 4)</scope>
    <source>
        <tissue>Brain</tissue>
    </source>
</reference>
<reference key="8">
    <citation type="journal article" date="1990" name="Mol. Cell. Biol.">
        <title>A cDNA for a human cyclic AMP response element-binding protein which is distinct from CREB and expressed preferentially in brain.</title>
        <authorList>
            <person name="Kara C.J."/>
            <person name="Liou H.-C."/>
            <person name="Ivashkiv L.B."/>
            <person name="Glimcher L.H."/>
        </authorList>
    </citation>
    <scope>NUCLEOTIDE SEQUENCE [MRNA] OF 211-505 (ISOFORMS 1/2)</scope>
</reference>
<reference key="9">
    <citation type="journal article" date="1996" name="Proc. Natl. Acad. Sci. U.S.A.">
        <title>Regulation of mitogen-activated protein kinases by a calcium/calmodulin-dependent protein kinase cascade.</title>
        <authorList>
            <person name="Enslen H."/>
            <person name="Tokumitsu H."/>
            <person name="Stork P.J."/>
            <person name="Davis R.J."/>
            <person name="Soderling T.R."/>
        </authorList>
    </citation>
    <scope>PHOSPHORYLATION BY CAMK4</scope>
</reference>
<reference key="10">
    <citation type="journal article" date="1998" name="J. Biol. Chem.">
        <title>Selective activation of p38 mitogen-activated protein (MAP) kinase isoforms by the MAP kinase kinases MKK3 and MKK6.</title>
        <authorList>
            <person name="Enslen H."/>
            <person name="Raingeaud J."/>
            <person name="Davis R.J."/>
        </authorList>
    </citation>
    <scope>PHOSPHORYLATION AT THR-69 AND THR-71</scope>
</reference>
<reference key="11">
    <citation type="journal article" date="1998" name="J. Biol. Chem.">
        <title>Characterization of functional domains of an embryonic stem cell coactivator UTF1 which are conserved and essential for potentiation of ATF-2 activity.</title>
        <authorList>
            <person name="Fukushima A."/>
            <person name="Okuda A."/>
            <person name="Nishimoto M."/>
            <person name="Seki N."/>
            <person name="Hori T.A."/>
            <person name="Muramatsu M."/>
        </authorList>
    </citation>
    <scope>INTERACTION WITH UTF1</scope>
</reference>
<reference key="12">
    <citation type="journal article" date="2000" name="Nature">
        <title>ATF-2 has intrinsic histone acetyltransferase activity which is modulated by phosphorylation.</title>
        <authorList>
            <person name="Kawasaki H."/>
            <person name="Schiltz L."/>
            <person name="Chiu R."/>
            <person name="Itakura K."/>
            <person name="Taira K."/>
            <person name="Nakatani Y."/>
            <person name="Yokoyama K.K."/>
        </authorList>
    </citation>
    <scope>FUNCTION</scope>
    <scope>CATALYTIC ACTIVITY</scope>
    <scope>PHOSPHORYLATION</scope>
    <scope>MUTAGENESIS OF THR-69 AND THR-71</scope>
</reference>
<reference key="13">
    <citation type="journal article" date="2002" name="EMBO J.">
        <title>Growth factors can activate ATF2 via a two-step mechanism: phosphorylation of Thr71 through the Ras-MEK-ERK pathway and of Thr69 through RalGDS-Src-p38.</title>
        <authorList>
            <person name="Ouwens D.M."/>
            <person name="de Ruiter N.D."/>
            <person name="van der Zon G.C."/>
            <person name="Carter A.P."/>
            <person name="Schouten J."/>
            <person name="van der Burgt C."/>
            <person name="Kooistra K."/>
            <person name="Bos J.L."/>
            <person name="Maassen J.A."/>
            <person name="van Dam H."/>
        </authorList>
    </citation>
    <scope>PHOSPHORYLATION AT THR-69 AND THR-71</scope>
</reference>
<reference key="14">
    <citation type="journal article" date="2004" name="J. Biol. Chem.">
        <title>Human vaccinia-related kinase 1 (VRK1) activates the ATF2 transcriptional activity by novel phosphorylation on Thr-73 and Ser-62 and cooperates with JNK.</title>
        <authorList>
            <person name="Sevilla A."/>
            <person name="Santos C.R."/>
            <person name="Vega F.M."/>
            <person name="Lazo P.A."/>
        </authorList>
    </citation>
    <scope>PHOSPHORYLATION AT SER-62 AND THR-73</scope>
    <scope>SUBCELLULAR LOCATION</scope>
</reference>
<reference key="15">
    <citation type="journal article" date="2005" name="Mol. Cell">
        <title>ATM-dependent phosphorylation of ATF2 is required for the DNA damage response.</title>
        <authorList>
            <person name="Bhoumik A."/>
            <person name="Takahashi S."/>
            <person name="Breitweiser W."/>
            <person name="Shiloh Y."/>
            <person name="Jones N."/>
            <person name="Ronai Z."/>
        </authorList>
    </citation>
    <scope>FUNCTION</scope>
    <scope>INTERACTION WITH NBN AND MRE11</scope>
    <scope>SUBCELLULAR LOCATION</scope>
    <scope>PHOSPHORYLATION AT SER-490 AND SER-498</scope>
</reference>
<reference key="16">
    <citation type="journal article" date="2007" name="Biochemistry">
        <title>Multiple roles for acetylation in the interaction of p300 HAT with ATF-2.</title>
        <authorList>
            <person name="Karanam B."/>
            <person name="Wang L."/>
            <person name="Wang D."/>
            <person name="Liu X."/>
            <person name="Marmorstein R."/>
            <person name="Cotter R."/>
            <person name="Cole P.A."/>
        </authorList>
    </citation>
    <scope>ACETYLATION AT LYS-357 AND LYS-374</scope>
    <scope>IDENTIFICATION BY MASS SPECTROMETRY</scope>
</reference>
<reference key="17">
    <citation type="journal article" date="2008" name="Cell Cycle">
        <title>ATF2: a transcription factor that elicits oncogenic or tumor suppressor activities.</title>
        <authorList>
            <person name="Bhoumik A."/>
            <person name="Ronai Z."/>
        </authorList>
    </citation>
    <scope>REVIEW</scope>
</reference>
<reference key="18">
    <citation type="journal article" date="2008" name="J. Biol. Chem.">
        <title>Regulation of TIP60 by ATF2 modulates ATM activation.</title>
        <authorList>
            <person name="Bhoumik A."/>
            <person name="Singha N."/>
            <person name="O'Connell M.J."/>
            <person name="Ronai Z.A."/>
        </authorList>
    </citation>
    <scope>FUNCTION</scope>
    <scope>INTERACTION WITH CUL3 AND KAT5</scope>
    <scope>SUBCELLULAR LOCATION</scope>
</reference>
<reference key="19">
    <citation type="journal article" date="2008" name="J. Proteome Res.">
        <title>Combining protein-based IMAC, peptide-based IMAC, and MudPIT for efficient phosphoproteomic analysis.</title>
        <authorList>
            <person name="Cantin G.T."/>
            <person name="Yi W."/>
            <person name="Lu B."/>
            <person name="Park S.K."/>
            <person name="Xu T."/>
            <person name="Lee J.-D."/>
            <person name="Yates J.R. III"/>
        </authorList>
    </citation>
    <scope>PHOSPHORYLATION [LARGE SCALE ANALYSIS] AT SER-328</scope>
    <scope>IDENTIFICATION BY MASS SPECTROMETRY [LARGE SCALE ANALYSIS]</scope>
    <source>
        <tissue>Cervix carcinoma</tissue>
    </source>
</reference>
<reference key="20">
    <citation type="journal article" date="2008" name="Proc. Natl. Acad. Sci. U.S.A.">
        <title>A quantitative atlas of mitotic phosphorylation.</title>
        <authorList>
            <person name="Dephoure N."/>
            <person name="Zhou C."/>
            <person name="Villen J."/>
            <person name="Beausoleil S.A."/>
            <person name="Bakalarski C.E."/>
            <person name="Elledge S.J."/>
            <person name="Gygi S.P."/>
        </authorList>
    </citation>
    <scope>PHOSPHORYLATION [LARGE SCALE ANALYSIS] AT THR-69 AND SER-112</scope>
    <scope>IDENTIFICATION BY MASS SPECTROMETRY [LARGE SCALE ANALYSIS]</scope>
    <source>
        <tissue>Cervix carcinoma</tissue>
    </source>
</reference>
<reference key="21">
    <citation type="journal article" date="2009" name="Anal. Chem.">
        <title>Lys-N and trypsin cover complementary parts of the phosphoproteome in a refined SCX-based approach.</title>
        <authorList>
            <person name="Gauci S."/>
            <person name="Helbig A.O."/>
            <person name="Slijper M."/>
            <person name="Krijgsveld J."/>
            <person name="Heck A.J."/>
            <person name="Mohammed S."/>
        </authorList>
    </citation>
    <scope>IDENTIFICATION BY MASS SPECTROMETRY [LARGE SCALE ANALYSIS]</scope>
</reference>
<reference key="22">
    <citation type="journal article" date="2009" name="J. Biol. Chem.">
        <title>Phosphorylation of activation transcription factor-2 at serine 121 by protein kinase c controls c-Jun-mediated activation of transcription.</title>
        <authorList>
            <person name="Yamasaki T."/>
            <person name="Takahashi A."/>
            <person name="Pan J."/>
            <person name="Yamaguchi N."/>
            <person name="Yokoyama K.K."/>
        </authorList>
    </citation>
    <scope>PHOSPHORYLATION AT THR-69; THR-71; SER-121; SER-340 AND SER-367</scope>
    <scope>SUBCELLULAR LOCATION</scope>
</reference>
<reference key="23">
    <citation type="journal article" date="2009" name="Sci. Signal.">
        <title>Quantitative phosphoproteomic analysis of T cell receptor signaling reveals system-wide modulation of protein-protein interactions.</title>
        <authorList>
            <person name="Mayya V."/>
            <person name="Lundgren D.H."/>
            <person name="Hwang S.-I."/>
            <person name="Rezaul K."/>
            <person name="Wu L."/>
            <person name="Eng J.K."/>
            <person name="Rodionov V."/>
            <person name="Han D.K."/>
        </authorList>
    </citation>
    <scope>PHOSPHORYLATION [LARGE SCALE ANALYSIS] AT THR-69; THR-71 AND SER-112</scope>
    <scope>IDENTIFICATION BY MASS SPECTROMETRY [LARGE SCALE ANALYSIS]</scope>
    <source>
        <tissue>Leukemic T-cell</tissue>
    </source>
</reference>
<reference key="24">
    <citation type="journal article" date="2010" name="Sci. Signal.">
        <title>Quantitative phosphoproteomics reveals widespread full phosphorylation site occupancy during mitosis.</title>
        <authorList>
            <person name="Olsen J.V."/>
            <person name="Vermeulen M."/>
            <person name="Santamaria A."/>
            <person name="Kumar C."/>
            <person name="Miller M.L."/>
            <person name="Jensen L.J."/>
            <person name="Gnad F."/>
            <person name="Cox J."/>
            <person name="Jensen T.S."/>
            <person name="Nigg E.A."/>
            <person name="Brunak S."/>
            <person name="Mann M."/>
        </authorList>
    </citation>
    <scope>PHOSPHORYLATION [LARGE SCALE ANALYSIS] AT THR-69; THR-71; SER-112 AND THR-116</scope>
    <scope>IDENTIFICATION BY MASS SPECTROMETRY [LARGE SCALE ANALYSIS]</scope>
    <source>
        <tissue>Cervix carcinoma</tissue>
    </source>
</reference>
<reference key="25">
    <citation type="journal article" date="2011" name="J. Biol. Chem.">
        <title>Hyperosmotic stress-induced ATF-2 activation through Polo-like kinase 3 in human corneal epithelial cells.</title>
        <authorList>
            <person name="Wang L."/>
            <person name="Payton R."/>
            <person name="Dai W."/>
            <person name="Lu L."/>
        </authorList>
    </citation>
    <scope>PHOSPHORYLATION AT THR-71</scope>
    <scope>SUBCELLULAR LOCATION</scope>
    <scope>MUTAGENESIS OF THR-71</scope>
</reference>
<reference key="26">
    <citation type="journal article" date="2011" name="Sci. Signal.">
        <title>System-wide temporal characterization of the proteome and phosphoproteome of human embryonic stem cell differentiation.</title>
        <authorList>
            <person name="Rigbolt K.T."/>
            <person name="Prokhorova T.A."/>
            <person name="Akimov V."/>
            <person name="Henningsen J."/>
            <person name="Johansen P.T."/>
            <person name="Kratchmarova I."/>
            <person name="Kassem M."/>
            <person name="Mann M."/>
            <person name="Olsen J.V."/>
            <person name="Blagoev B."/>
        </authorList>
    </citation>
    <scope>PHOSPHORYLATION [LARGE SCALE ANALYSIS] AT THR-69; THR-71; SER-90 AND SER-112</scope>
    <scope>IDENTIFICATION BY MASS SPECTROMETRY [LARGE SCALE ANALYSIS]</scope>
</reference>
<reference key="27">
    <citation type="journal article" date="2012" name="Cell">
        <title>PKCepsilon promotes oncogenic functions of ATF2 in the nucleus while blocking its apoptotic function at mitochondria.</title>
        <authorList>
            <person name="Lau E."/>
            <person name="Kluger H."/>
            <person name="Varsano T."/>
            <person name="Lee K."/>
            <person name="Scheffler I."/>
            <person name="Rimm D.L."/>
            <person name="Ideker T."/>
            <person name="Ronai Z.A."/>
        </authorList>
    </citation>
    <scope>FUNCTION</scope>
    <scope>SUBCELLULAR LOCATION</scope>
    <scope>INTERACTION WITH HK1/VDAC1 COMPLEX</scope>
    <scope>PHOSPHORYLATION AT THR-52</scope>
</reference>
<reference key="28">
    <citation type="journal article" date="2012" name="J. Biol. Chem.">
        <title>Critical role of N-terminal end-localized nuclear export signal in regulation of activating transcription factor 2 (ATF2) subcellular localization and transcriptional activity.</title>
        <authorList>
            <person name="Hsu C.C."/>
            <person name="Hu C.D."/>
        </authorList>
    </citation>
    <scope>SUBCELLULAR LOCATION</scope>
    <scope>NUCLEAR EXPORT SIGNAL</scope>
    <scope>INTERACTION WITH XPO1</scope>
    <scope>HETERODIMERIZATION WITH JUN</scope>
</reference>
<reference key="29">
    <citation type="journal article" date="2012" name="J. Cell Sci.">
        <title>ATF2-at the crossroad of nuclear and cytosolic functions.</title>
        <authorList>
            <person name="Lau E."/>
            <person name="Ronai Z.A."/>
        </authorList>
    </citation>
    <scope>REVIEW</scope>
</reference>
<reference key="30">
    <citation type="journal article" date="2013" name="J. Proteome Res.">
        <title>Toward a comprehensive characterization of a human cancer cell phosphoproteome.</title>
        <authorList>
            <person name="Zhou H."/>
            <person name="Di Palma S."/>
            <person name="Preisinger C."/>
            <person name="Peng M."/>
            <person name="Polat A.N."/>
            <person name="Heck A.J."/>
            <person name="Mohammed S."/>
        </authorList>
    </citation>
    <scope>PHOSPHORYLATION [LARGE SCALE ANALYSIS] AT SER-62; THR-69; THR-71; SER-112 AND SER-136</scope>
    <scope>IDENTIFICATION BY MASS SPECTROMETRY [LARGE SCALE ANALYSIS]</scope>
    <source>
        <tissue>Cervix carcinoma</tissue>
        <tissue>Erythroleukemia</tissue>
    </source>
</reference>
<reference key="31">
    <citation type="journal article" date="2014" name="J. Proteomics">
        <title>An enzyme assisted RP-RPLC approach for in-depth analysis of human liver phosphoproteome.</title>
        <authorList>
            <person name="Bian Y."/>
            <person name="Song C."/>
            <person name="Cheng K."/>
            <person name="Dong M."/>
            <person name="Wang F."/>
            <person name="Huang J."/>
            <person name="Sun D."/>
            <person name="Wang L."/>
            <person name="Ye M."/>
            <person name="Zou H."/>
        </authorList>
    </citation>
    <scope>PHOSPHORYLATION [LARGE SCALE ANALYSIS] AT SER-112; SER-328; SER-442 AND SER-446</scope>
    <scope>IDENTIFICATION BY MASS SPECTROMETRY [LARGE SCALE ANALYSIS]</scope>
    <source>
        <tissue>Liver</tissue>
    </source>
</reference>
<reference key="32">
    <citation type="journal article" date="1999" name="J. Mol. Biol.">
        <title>Solution structure of the transactivation domain of ATF-2 comprising a zinc finger-like subdomain and a flexible subdomain.</title>
        <authorList>
            <person name="Nagadoi A."/>
            <person name="Nakazawa K."/>
            <person name="Uda H."/>
            <person name="Okuno K."/>
            <person name="Maekawa T."/>
            <person name="Ishii S."/>
            <person name="Nishimura Y."/>
        </authorList>
    </citation>
    <scope>STRUCTURE BY NMR OF 19-56</scope>
</reference>
<reference key="33">
    <citation type="journal article" date="2006" name="Science">
        <title>The consensus coding sequences of human breast and colorectal cancers.</title>
        <authorList>
            <person name="Sjoeblom T."/>
            <person name="Jones S."/>
            <person name="Wood L.D."/>
            <person name="Parsons D.W."/>
            <person name="Lin J."/>
            <person name="Barber T.D."/>
            <person name="Mandelker D."/>
            <person name="Leary R.J."/>
            <person name="Ptak J."/>
            <person name="Silliman N."/>
            <person name="Szabo S."/>
            <person name="Buckhaults P."/>
            <person name="Farrell C."/>
            <person name="Meeh P."/>
            <person name="Markowitz S.D."/>
            <person name="Willis J."/>
            <person name="Dawson D."/>
            <person name="Willson J.K.V."/>
            <person name="Gazdar A.F."/>
            <person name="Hartigan J."/>
            <person name="Wu L."/>
            <person name="Liu C."/>
            <person name="Parmigiani G."/>
            <person name="Park B.H."/>
            <person name="Bachman K.E."/>
            <person name="Papadopoulos N."/>
            <person name="Vogelstein B."/>
            <person name="Kinzler K.W."/>
            <person name="Velculescu V.E."/>
        </authorList>
    </citation>
    <scope>VARIANT [LARGE SCALE ANALYSIS] HIS-352</scope>
</reference>
<comment type="function">
    <text evidence="4 7 10 14">Transcriptional activator which regulates the transcription of various genes, including those involved in anti-apoptosis, cell growth, and DNA damage response. Dependent on its binding partner, binds to CRE (cAMP response element) consensus sequences (5'-TGACGTCA-3') or to AP-1 (activator protein 1) consensus sequences (5'-TGACTCA-3'). In the nucleus, contributes to global transcription and the DNA damage response, in addition to specific transcriptional activities that are related to cell development, proliferation and death. In the cytoplasm, interacts with and perturbs HK1- and VDAC1-containing complexes at the mitochondrial outer membrane, thereby impairing mitochondrial membrane potential, inducing mitochondrial leakage and promoting cell death. The phosphorylated form (mediated by ATM) plays a role in the DNA damage response and is involved in the ionizing radiation (IR)-induced S phase checkpoint control and in the recruitment of the MRN complex into the IR-induced foci (IRIF). Exhibits histone acetyltransferase (HAT) activity which specifically acetylates histones H2B and H4 in vitro (PubMed:10821277). In concert with CUL3 and RBX1, promotes the degradation of KAT5 thereby attenuating its ability to acetylate and activate ATM. Can elicit oncogenic or tumor suppressor activities depending on the tissue or cell type.</text>
</comment>
<comment type="subunit">
    <text evidence="7 10 13 14 17">Binds DNA as a dimer and can form a homodimer in the absence of DNA. Can form a heterodimer with JUN. Heterodimerization is essential for its transcriptional activity. Interacts with SMAD3 and SMAD4. Binds through its N-terminal region to UTF1 which acts as a coactivator of ATF2 transcriptional activity. Interacts with the HK1/VDAC1 complex. Interacts with NBN, MRE11, XPO1, KAT5 and CUL3.</text>
</comment>
<comment type="interaction">
    <interactant intactId="EBI-1170906">
        <id>P15336</id>
    </interactant>
    <interactant intactId="EBI-1170906">
        <id>P15336</id>
        <label>ATF2</label>
    </interactant>
    <organismsDiffer>false</organismsDiffer>
    <experiments>2</experiments>
</comment>
<comment type="interaction">
    <interactant intactId="EBI-1170906">
        <id>P15336</id>
    </interactant>
    <interactant intactId="EBI-712767">
        <id>P18847</id>
        <label>ATF3</label>
    </interactant>
    <organismsDiffer>false</organismsDiffer>
    <experiments>5</experiments>
</comment>
<comment type="interaction">
    <interactant intactId="EBI-1170906">
        <id>P15336</id>
    </interactant>
    <interactant intactId="EBI-492498">
        <id>P18848</id>
        <label>ATF4</label>
    </interactant>
    <organismsDiffer>false</organismsDiffer>
    <experiments>2</experiments>
</comment>
<comment type="interaction">
    <interactant intactId="EBI-1170906">
        <id>P15336</id>
    </interactant>
    <interactant intactId="EBI-765623">
        <id>P17544</id>
        <label>ATF7</label>
    </interactant>
    <organismsDiffer>false</organismsDiffer>
    <experiments>4</experiments>
</comment>
<comment type="interaction">
    <interactant intactId="EBI-1170906">
        <id>P15336</id>
    </interactant>
    <interactant intactId="EBI-1263541">
        <id>O14867</id>
        <label>BACH1</label>
    </interactant>
    <organismsDiffer>false</organismsDiffer>
    <experiments>3</experiments>
</comment>
<comment type="interaction">
    <interactant intactId="EBI-1170906">
        <id>P15336</id>
    </interactant>
    <interactant intactId="EBI-11524452">
        <id>Q8N9N5-2</id>
        <label>BANP</label>
    </interactant>
    <organismsDiffer>false</organismsDiffer>
    <experiments>3</experiments>
</comment>
<comment type="interaction">
    <interactant intactId="EBI-1170906">
        <id>P15336</id>
    </interactant>
    <interactant intactId="EBI-749503">
        <id>Q16520</id>
        <label>BATF</label>
    </interactant>
    <organismsDiffer>false</organismsDiffer>
    <experiments>2</experiments>
</comment>
<comment type="interaction">
    <interactant intactId="EBI-1170906">
        <id>P15336</id>
    </interactant>
    <interactant intactId="EBI-10312707">
        <id>Q9NR55</id>
        <label>BATF3</label>
    </interactant>
    <organismsDiffer>false</organismsDiffer>
    <experiments>5</experiments>
</comment>
<comment type="interaction">
    <interactant intactId="EBI-1170906">
        <id>P15336</id>
    </interactant>
    <interactant intactId="EBI-740209">
        <id>P53567</id>
        <label>CEBPG</label>
    </interactant>
    <organismsDiffer>false</organismsDiffer>
    <experiments>3</experiments>
</comment>
<comment type="interaction">
    <interactant intactId="EBI-1170906">
        <id>P15336</id>
    </interactant>
    <interactant intactId="EBI-2350265">
        <id>Q7L2Z9</id>
        <label>CENPQ</label>
    </interactant>
    <organismsDiffer>false</organismsDiffer>
    <experiments>5</experiments>
</comment>
<comment type="interaction">
    <interactant intactId="EBI-1170906">
        <id>P15336</id>
    </interactant>
    <interactant intactId="EBI-2624951">
        <id>Q99966</id>
        <label>CITED1</label>
    </interactant>
    <organismsDiffer>false</organismsDiffer>
    <experiments>2</experiments>
</comment>
<comment type="interaction">
    <interactant intactId="EBI-1170906">
        <id>P15336</id>
    </interactant>
    <interactant intactId="EBI-742651">
        <id>P35638</id>
        <label>DDIT3</label>
    </interactant>
    <organismsDiffer>false</organismsDiffer>
    <experiments>2</experiments>
</comment>
<comment type="interaction">
    <interactant intactId="EBI-1170906">
        <id>P15336</id>
    </interactant>
    <interactant intactId="EBI-371922">
        <id>Q96B26</id>
        <label>EXOSC8</label>
    </interactant>
    <organismsDiffer>false</organismsDiffer>
    <experiments>3</experiments>
</comment>
<comment type="interaction">
    <interactant intactId="EBI-1170906">
        <id>P15336</id>
    </interactant>
    <interactant intactId="EBI-852851">
        <id>P01100</id>
        <label>FOS</label>
    </interactant>
    <organismsDiffer>false</organismsDiffer>
    <experiments>15</experiments>
</comment>
<comment type="interaction">
    <interactant intactId="EBI-1170906">
        <id>P15336</id>
    </interactant>
    <interactant intactId="EBI-10198738">
        <id>Q6FG41</id>
        <label>FOS</label>
    </interactant>
    <organismsDiffer>false</organismsDiffer>
    <experiments>3</experiments>
</comment>
<comment type="interaction">
    <interactant intactId="EBI-1170906">
        <id>P15336</id>
    </interactant>
    <interactant intactId="EBI-2806743">
        <id>P53539</id>
        <label>FOSB</label>
    </interactant>
    <organismsDiffer>false</organismsDiffer>
    <experiments>5</experiments>
</comment>
<comment type="interaction">
    <interactant intactId="EBI-1170906">
        <id>P15336</id>
    </interactant>
    <interactant intactId="EBI-744510">
        <id>P15407</id>
        <label>FOSL1</label>
    </interactant>
    <organismsDiffer>false</organismsDiffer>
    <experiments>3</experiments>
</comment>
<comment type="interaction">
    <interactant intactId="EBI-1170906">
        <id>P15336</id>
    </interactant>
    <interactant intactId="EBI-3893419">
        <id>P15408</id>
        <label>FOSL2</label>
    </interactant>
    <organismsDiffer>false</organismsDiffer>
    <experiments>8</experiments>
</comment>
<comment type="interaction">
    <interactant intactId="EBI-1170906">
        <id>P15336</id>
    </interactant>
    <interactant intactId="EBI-308629">
        <id>P56524</id>
        <label>HDAC4</label>
    </interactant>
    <organismsDiffer>false</organismsDiffer>
    <experiments>2</experiments>
</comment>
<comment type="interaction">
    <interactant intactId="EBI-1170906">
        <id>P15336</id>
    </interactant>
    <interactant intactId="EBI-852823">
        <id>P05412</id>
        <label>JUN</label>
    </interactant>
    <organismsDiffer>false</organismsDiffer>
    <experiments>22</experiments>
</comment>
<comment type="interaction">
    <interactant intactId="EBI-1170906">
        <id>P15336</id>
    </interactant>
    <interactant intactId="EBI-748062">
        <id>P17275</id>
        <label>JUNB</label>
    </interactant>
    <organismsDiffer>false</organismsDiffer>
    <experiments>6</experiments>
</comment>
<comment type="interaction">
    <interactant intactId="EBI-1170906">
        <id>P15336</id>
    </interactant>
    <interactant intactId="EBI-2682803">
        <id>P17535</id>
        <label>JUND</label>
    </interactant>
    <organismsDiffer>false</organismsDiffer>
    <experiments>6</experiments>
</comment>
<comment type="interaction">
    <interactant intactId="EBI-1170906">
        <id>P15336</id>
    </interactant>
    <interactant intactId="EBI-2125614">
        <id>Q9BVG8</id>
        <label>KIFC3</label>
    </interactant>
    <organismsDiffer>false</organismsDiffer>
    <experiments>3</experiments>
</comment>
<comment type="interaction">
    <interactant intactId="EBI-1170906">
        <id>P15336</id>
    </interactant>
    <interactant intactId="EBI-14069005">
        <id>Q9BVG8-5</id>
        <label>KIFC3</label>
    </interactant>
    <organismsDiffer>false</organismsDiffer>
    <experiments>3</experiments>
</comment>
<comment type="interaction">
    <interactant intactId="EBI-1170906">
        <id>P15336</id>
    </interactant>
    <interactant intactId="EBI-8474075">
        <id>Q68G74</id>
        <label>LHX8</label>
    </interactant>
    <organismsDiffer>false</organismsDiffer>
    <experiments>3</experiments>
</comment>
<comment type="interaction">
    <interactant intactId="EBI-1170906">
        <id>P15336</id>
    </interactant>
    <interactant intactId="EBI-713568">
        <id>P45984</id>
        <label>MAPK9</label>
    </interactant>
    <organismsDiffer>false</organismsDiffer>
    <experiments>9</experiments>
</comment>
<comment type="interaction">
    <interactant intactId="EBI-1170906">
        <id>P15336</id>
    </interactant>
    <interactant intactId="EBI-6907210">
        <id>O95644</id>
        <label>NFATC1</label>
    </interactant>
    <organismsDiffer>false</organismsDiffer>
    <experiments>2</experiments>
</comment>
<comment type="interaction">
    <interactant intactId="EBI-1170906">
        <id>P15336</id>
    </interactant>
    <interactant intactId="EBI-348567">
        <id>O75928-2</id>
        <label>PIAS2</label>
    </interactant>
    <organismsDiffer>false</organismsDiffer>
    <experiments>3</experiments>
</comment>
<comment type="interaction">
    <interactant intactId="EBI-1170906">
        <id>P15336</id>
    </interactant>
    <interactant intactId="EBI-2340927">
        <id>P78317</id>
        <label>RNF4</label>
    </interactant>
    <organismsDiffer>false</organismsDiffer>
    <experiments>3</experiments>
</comment>
<comment type="interaction">
    <interactant intactId="EBI-1170906">
        <id>P15336</id>
    </interactant>
    <interactant intactId="EBI-2822161">
        <id>Q6IQ16</id>
        <label>SPOPL</label>
    </interactant>
    <organismsDiffer>false</organismsDiffer>
    <experiments>3</experiments>
</comment>
<comment type="interaction">
    <interactant intactId="EBI-1170906">
        <id>P15336</id>
    </interactant>
    <interactant intactId="EBI-2560599">
        <id>Q15532</id>
        <label>SS18</label>
    </interactant>
    <organismsDiffer>false</organismsDiffer>
    <experiments>2</experiments>
</comment>
<comment type="interaction">
    <interactant intactId="EBI-1170906">
        <id>P15336</id>
    </interactant>
    <interactant intactId="EBI-80140">
        <id>P63165</id>
        <label>SUMO1</label>
    </interactant>
    <organismsDiffer>false</organismsDiffer>
    <experiments>6</experiments>
</comment>
<comment type="interaction">
    <interactant intactId="EBI-1170906">
        <id>P15336</id>
    </interactant>
    <interactant intactId="EBI-6050533">
        <id>A4PIW0</id>
        <label>SYT-SSX2</label>
    </interactant>
    <organismsDiffer>false</organismsDiffer>
    <experiments>11</experiments>
</comment>
<comment type="interaction">
    <interactant intactId="EBI-1170906">
        <id>P15336</id>
    </interactant>
    <interactant intactId="EBI-1769146">
        <id>Q99986</id>
        <label>VRK1</label>
    </interactant>
    <organismsDiffer>false</organismsDiffer>
    <experiments>5</experiments>
</comment>
<comment type="interaction">
    <interactant intactId="EBI-1170906">
        <id>P15336</id>
    </interactant>
    <interactant intactId="EBI-524753">
        <id>Q8IUH5</id>
        <label>ZDHHC17</label>
    </interactant>
    <organismsDiffer>false</organismsDiffer>
    <experiments>3</experiments>
</comment>
<comment type="interaction">
    <interactant intactId="EBI-1170906">
        <id>P15336</id>
    </interactant>
    <interactant intactId="EBI-10890294">
        <id>P0C746</id>
        <label>HBZ</label>
    </interactant>
    <organismsDiffer>true</organismsDiffer>
    <experiments>3</experiments>
</comment>
<comment type="interaction">
    <interactant intactId="EBI-1170906">
        <id>P15336</id>
    </interactant>
    <interactant intactId="EBI-10889526">
        <id>Q9DGW5</id>
        <label>MDV005</label>
    </interactant>
    <organismsDiffer>true</organismsDiffer>
    <experiments>2</experiments>
</comment>
<comment type="subcellular location">
    <subcellularLocation>
        <location>Nucleus</location>
    </subcellularLocation>
    <subcellularLocation>
        <location>Cytoplasm</location>
    </subcellularLocation>
    <subcellularLocation>
        <location>Mitochondrion outer membrane</location>
    </subcellularLocation>
    <text>Shuttles between the cytoplasm and the nucleus and heterodimerization with JUN is essential for the nuclear localization. Localization to the cytoplasm is observed under conditions of cellular stress and in disease states. Localizes at the mitochondrial outer membrane in response to genotoxic stress. Phosphorylation at Thr-52 is required for its nuclear localization and negatively regulates its mitochondrial localization. Co-localizes with the MRN complex in the IR-induced foci (IRIF).</text>
</comment>
<comment type="alternative products">
    <event type="alternative splicing"/>
    <isoform>
        <id>P15336-1</id>
        <name>1</name>
        <sequence type="displayed"/>
    </isoform>
    <isoform>
        <id>P15336-2</id>
        <name>2</name>
        <sequence type="described" ref="VSP_000587 VSP_000588"/>
    </isoform>
    <isoform>
        <id>P15336-3</id>
        <name>3</name>
        <sequence type="described" ref="VSP_045161"/>
    </isoform>
    <isoform>
        <id>P15336-4</id>
        <name>4</name>
        <sequence type="described" ref="VSP_046959"/>
    </isoform>
    <isoform>
        <id>P15336-5</id>
        <name>5</name>
        <sequence type="described" ref="VSP_046960"/>
    </isoform>
    <isoform>
        <id>P15336-6</id>
        <name>6</name>
        <sequence type="described" ref="VSP_046960 VSP_047593"/>
    </isoform>
    <isoform>
        <id>P15336-7</id>
        <name>7</name>
        <sequence type="described" ref="VSP_046960 VSP_047594 VSP_047595"/>
    </isoform>
    <isoform>
        <id>P15336-8</id>
        <name>8</name>
        <name>ATF2-small</name>
        <sequence type="described" ref="VSP_047593"/>
    </isoform>
</comment>
<comment type="tissue specificity">
    <text>Ubiquitously expressed, with more abundant expression in the brain.</text>
</comment>
<comment type="domain">
    <text>The nuclear export signal 1 (N-NES) negatively regulates its nuclear localization and transcriptional activity.</text>
</comment>
<comment type="PTM">
    <text evidence="4 5 6 7 12 15 16">Phosphorylation of Thr-69 by MAPK14 and MAPK11, and at Thr-71 by MAPK1/ERK2, MAPK3/ERK1, MAPK11, MAPK12 and MAPK14 in response to external stimulus like insulin causes increased transcriptional activity (PubMed:12110590, PubMed:9430721). Phosphorylated by PLK3 following hyperosmotic stress (PubMed:21098032). Also phosphorylated and activated by JNK and CaMK4 (PubMed:8855261). ATM-mediated phosphorylation at Ser-490 and Ser-498 stimulates its function in DNA damage response (PubMed:15916964). Phosphorylation at Ser-62, Thr-73 and Ser-121 activates its transcriptional activity (PubMed:15105425). Phosphorylation at Thr-69 or Thr-71 enhances acetylation of histones H2B and H4 (PubMed:10821277).</text>
</comment>
<comment type="similarity">
    <text evidence="22">Belongs to the bZIP family. ATF subfamily.</text>
</comment>
<comment type="caution">
    <text evidence="4 22">Appears to have histone acetyltransferase (HAT) activity, specifically towards histones H2B and H4 in vitro (PubMed:10821277). However, it is not clear if this activity is genuine or caused by contamination with other histone acetyltransferases in the assay.</text>
</comment>
<comment type="sequence caution" evidence="22">
    <conflict type="erroneous initiation">
        <sequence resource="EMBL-CDS" id="AAY17203"/>
    </conflict>
    <text>Truncated N-terminus.</text>
</comment>
<comment type="sequence caution" evidence="22">
    <conflict type="erroneous initiation">
        <sequence resource="EMBL-CDS" id="AAY17207"/>
    </conflict>
    <text>Truncated N-terminus.</text>
</comment>
<comment type="online information" name="Atlas of Genetics and Cytogenetics in Oncology and Haematology">
    <link uri="https://atlasgeneticsoncology.org/gene/718/ATF2"/>
</comment>
<feature type="chain" id="PRO_0000076577" description="Cyclic AMP-dependent transcription factor ATF-2">
    <location>
        <begin position="1"/>
        <end position="505"/>
    </location>
</feature>
<feature type="domain" description="bZIP" evidence="2">
    <location>
        <begin position="352"/>
        <end position="415"/>
    </location>
</feature>
<feature type="zinc finger region" description="C2H2-type" evidence="1">
    <location>
        <begin position="25"/>
        <end position="49"/>
    </location>
</feature>
<feature type="region of interest" description="Disordered" evidence="3">
    <location>
        <begin position="125"/>
        <end position="155"/>
    </location>
</feature>
<feature type="region of interest" description="Disordered" evidence="3">
    <location>
        <begin position="259"/>
        <end position="373"/>
    </location>
</feature>
<feature type="region of interest" description="Essential for its histone acetyltransferase activity">
    <location>
        <begin position="296"/>
        <end position="299"/>
    </location>
</feature>
<feature type="region of interest" description="Basic motif" evidence="2">
    <location>
        <begin position="354"/>
        <end position="374"/>
    </location>
</feature>
<feature type="region of interest" description="Leucine-zipper" evidence="2">
    <location>
        <begin position="380"/>
        <end position="408"/>
    </location>
</feature>
<feature type="region of interest" description="Disordered" evidence="3">
    <location>
        <begin position="425"/>
        <end position="472"/>
    </location>
</feature>
<feature type="short sequence motif" description="Nuclear export signal 1 (N-NES)">
    <location>
        <begin position="1"/>
        <end position="7"/>
    </location>
</feature>
<feature type="short sequence motif" description="Nuclear export signal 2 (C-NES)">
    <location>
        <begin position="405"/>
        <end position="414"/>
    </location>
</feature>
<feature type="compositionally biased region" description="Polar residues" evidence="3">
    <location>
        <begin position="282"/>
        <end position="293"/>
    </location>
</feature>
<feature type="compositionally biased region" description="Low complexity" evidence="3">
    <location>
        <begin position="318"/>
        <end position="334"/>
    </location>
</feature>
<feature type="compositionally biased region" description="Basic and acidic residues" evidence="3">
    <location>
        <begin position="346"/>
        <end position="363"/>
    </location>
</feature>
<feature type="compositionally biased region" description="Polar residues" evidence="3">
    <location>
        <begin position="443"/>
        <end position="454"/>
    </location>
</feature>
<feature type="compositionally biased region" description="Low complexity" evidence="3">
    <location>
        <begin position="455"/>
        <end position="467"/>
    </location>
</feature>
<feature type="modified residue" description="Phosphothreonine; by PKC/PRKCH" evidence="14">
    <location>
        <position position="52"/>
    </location>
</feature>
<feature type="modified residue" description="Phosphoserine; by VRK1" evidence="6 28">
    <location>
        <position position="62"/>
    </location>
</feature>
<feature type="modified residue" description="Phosphothreonine; by MAPK11 and MAPK14" evidence="5 11 16 24 25 26 27 28">
    <location>
        <position position="69"/>
    </location>
</feature>
<feature type="modified residue" description="Phosphothreonine; by MAPK1, MAPK3, MAPK11, MAPK12, MAPK14 and PLK3" evidence="5 11 12 16 25 26 27 28">
    <location>
        <position position="71"/>
    </location>
</feature>
<feature type="modified residue" description="Phosphothreonine; by VRK1" evidence="6">
    <location>
        <position position="73"/>
    </location>
</feature>
<feature type="modified residue" description="Phosphoserine" evidence="27">
    <location>
        <position position="90"/>
    </location>
</feature>
<feature type="modified residue" description="Phosphoserine" evidence="24 25 26 27 28 29">
    <location>
        <position position="112"/>
    </location>
</feature>
<feature type="modified residue" description="Phosphothreonine" evidence="26">
    <location>
        <position position="116"/>
    </location>
</feature>
<feature type="modified residue" description="Phosphoserine; by PKC/PRKCA and PKC/PRKCB" evidence="11">
    <location>
        <position position="121"/>
    </location>
</feature>
<feature type="modified residue" description="Phosphoserine" evidence="28">
    <location>
        <position position="136"/>
    </location>
</feature>
<feature type="modified residue" description="Phosphoserine" evidence="23 29">
    <location>
        <position position="328"/>
    </location>
</feature>
<feature type="modified residue" description="Phosphoserine; by PKC/PRKCA and PKC/PRKCB" evidence="11">
    <location>
        <position position="340"/>
    </location>
</feature>
<feature type="modified residue" description="N6-acetyllysine" evidence="9">
    <location>
        <position position="357"/>
    </location>
</feature>
<feature type="modified residue" description="Phosphoserine; by PKC/PRKCA and PKC/PRKCB" evidence="11">
    <location>
        <position position="367"/>
    </location>
</feature>
<feature type="modified residue" description="N6-acetyllysine" evidence="9">
    <location>
        <position position="374"/>
    </location>
</feature>
<feature type="modified residue" description="Phosphoserine" evidence="29">
    <location>
        <position position="442"/>
    </location>
</feature>
<feature type="modified residue" description="Phosphoserine" evidence="29">
    <location>
        <position position="446"/>
    </location>
</feature>
<feature type="modified residue" description="Phosphoserine; by ATM" evidence="7">
    <location>
        <position position="490"/>
    </location>
</feature>
<feature type="modified residue" description="Phosphoserine; by ATM" evidence="7">
    <location>
        <position position="498"/>
    </location>
</feature>
<feature type="splice variant" id="VSP_000587" description="In isoform 2." evidence="20">
    <location>
        <begin position="1"/>
        <end position="176"/>
    </location>
</feature>
<feature type="splice variant" id="VSP_046959" description="In isoform 4." evidence="19">
    <original>MKFKLHVNSARQYKDLWNMSDDKPFLCTAPGCGQRFTNEDHLAVHKHKHEMTLKFGPARNDSVIVA</original>
    <variation>MYCAWMWP</variation>
    <location>
        <begin position="1"/>
        <end position="66"/>
    </location>
</feature>
<feature type="splice variant" id="VSP_046960" description="In isoform 5, isoform 6 and isoform 7." evidence="21">
    <location>
        <begin position="1"/>
        <end position="18"/>
    </location>
</feature>
<feature type="splice variant" id="VSP_047593" description="In isoform 6 and isoform 8." evidence="18 21">
    <location>
        <begin position="34"/>
        <end position="394"/>
    </location>
</feature>
<feature type="splice variant" id="VSP_000588" description="In isoform 2." evidence="20">
    <original>TSSDSSVII</original>
    <variation>MSTAYFQMM</variation>
    <location>
        <begin position="177"/>
        <end position="185"/>
    </location>
</feature>
<feature type="splice variant" id="VSP_045161" description="In isoform 3." evidence="19">
    <location>
        <begin position="210"/>
        <end position="505"/>
    </location>
</feature>
<feature type="splice variant" id="VSP_047594" description="In isoform 7." evidence="21">
    <original>PVPGPFPLLLHLPNGQTMPVAIPASITS</original>
    <variation>SFDQSPWCLVFQESQVLPLPNQYSQKQK</variation>
    <location>
        <begin position="210"/>
        <end position="237"/>
    </location>
</feature>
<feature type="splice variant" id="VSP_047595" description="In isoform 7." evidence="21">
    <location>
        <begin position="238"/>
        <end position="505"/>
    </location>
</feature>
<feature type="sequence variant" id="VAR_035999" description="In a breast cancer sample; somatic mutation." evidence="8">
    <original>D</original>
    <variation>H</variation>
    <location>
        <position position="352"/>
    </location>
</feature>
<feature type="mutagenesis site" description="Weak histone acetyltransferase activity." evidence="4">
    <original>T</original>
    <variation>A</variation>
    <location>
        <position position="69"/>
    </location>
</feature>
<feature type="mutagenesis site" description="Impairs phosphorylation by PLK3. Weak histone acetyltransferase activity." evidence="4 12">
    <original>T</original>
    <variation>A</variation>
    <location>
        <position position="71"/>
    </location>
</feature>
<feature type="mutagenesis site" description="Reduced phosphorylation and repression of c-Jun-mediated activation of transcription.">
    <original>S</original>
    <variation>A</variation>
    <location>
        <position position="121"/>
    </location>
</feature>
<feature type="sequence conflict" description="In Ref. 2; AAB64017." evidence="22" ref="2">
    <original>V</original>
    <variation>L</variation>
    <location>
        <position position="209"/>
    </location>
</feature>
<feature type="sequence conflict" description="In Ref. 1; CAA33886 and 4; AAY17203/AAY17207/AAY17215." evidence="22" ref="1 4">
    <original>N</original>
    <variation>S</variation>
    <location>
        <position position="223"/>
    </location>
</feature>
<feature type="sequence conflict" description="In Ref. 2; AAB64017." evidence="22" ref="2">
    <original>R</original>
    <variation>L</variation>
    <location>
        <position position="311"/>
    </location>
</feature>
<feature type="turn" evidence="30">
    <location>
        <begin position="30"/>
        <end position="32"/>
    </location>
</feature>
<feature type="strand" evidence="33">
    <location>
        <begin position="35"/>
        <end position="38"/>
    </location>
</feature>
<feature type="helix" evidence="33">
    <location>
        <begin position="39"/>
        <end position="49"/>
    </location>
</feature>
<feature type="turn" evidence="30">
    <location>
        <begin position="51"/>
        <end position="55"/>
    </location>
</feature>
<feature type="helix" evidence="32">
    <location>
        <begin position="91"/>
        <end position="100"/>
    </location>
</feature>
<feature type="helix" evidence="31">
    <location>
        <begin position="355"/>
        <end position="412"/>
    </location>
</feature>
<keyword id="KW-0002">3D-structure</keyword>
<keyword id="KW-0007">Acetylation</keyword>
<keyword id="KW-0010">Activator</keyword>
<keyword id="KW-0025">Alternative splicing</keyword>
<keyword id="KW-0963">Cytoplasm</keyword>
<keyword id="KW-0227">DNA damage</keyword>
<keyword id="KW-0238">DNA-binding</keyword>
<keyword id="KW-0472">Membrane</keyword>
<keyword id="KW-0479">Metal-binding</keyword>
<keyword id="KW-0496">Mitochondrion</keyword>
<keyword id="KW-1000">Mitochondrion outer membrane</keyword>
<keyword id="KW-0539">Nucleus</keyword>
<keyword id="KW-0597">Phosphoprotein</keyword>
<keyword id="KW-1267">Proteomics identification</keyword>
<keyword id="KW-1185">Reference proteome</keyword>
<keyword id="KW-0804">Transcription</keyword>
<keyword id="KW-0805">Transcription regulation</keyword>
<keyword id="KW-0862">Zinc</keyword>
<keyword id="KW-0863">Zinc-finger</keyword>
<protein>
    <recommendedName>
        <fullName>Cyclic AMP-dependent transcription factor ATF-2</fullName>
        <shortName>cAMP-dependent transcription factor ATF-2</shortName>
    </recommendedName>
    <alternativeName>
        <fullName>Activating transcription factor 2</fullName>
    </alternativeName>
    <alternativeName>
        <fullName>Cyclic AMP-responsive element-binding protein 2</fullName>
        <shortName>CREB-2</shortName>
        <shortName>cAMP-responsive element-binding protein 2</shortName>
    </alternativeName>
    <alternativeName>
        <fullName>HB16</fullName>
    </alternativeName>
    <alternativeName>
        <fullName>cAMP response element-binding protein CRE-BP1</fullName>
    </alternativeName>
</protein>
<name>ATF2_HUMAN</name>
<gene>
    <name type="primary">ATF2</name>
    <name type="synonym">CREB2</name>
    <name type="synonym">CREBP1</name>
</gene>
<accession>P15336</accession>
<accession>A1L3Z2</accession>
<accession>A4D7U4</accession>
<accession>A4D7U5</accession>
<accession>A4D7V1</accession>
<accession>D3DPE9</accession>
<accession>G8JLM5</accession>
<accession>Q13000</accession>
<accession>Q3B7B7</accession>
<accession>Q4ZFU9</accession>
<accession>Q53RY2</accession>
<accession>Q8TAR1</accession>
<accession>Q96JT8</accession>
<organism>
    <name type="scientific">Homo sapiens</name>
    <name type="common">Human</name>
    <dbReference type="NCBI Taxonomy" id="9606"/>
    <lineage>
        <taxon>Eukaryota</taxon>
        <taxon>Metazoa</taxon>
        <taxon>Chordata</taxon>
        <taxon>Craniata</taxon>
        <taxon>Vertebrata</taxon>
        <taxon>Euteleostomi</taxon>
        <taxon>Mammalia</taxon>
        <taxon>Eutheria</taxon>
        <taxon>Euarchontoglires</taxon>
        <taxon>Primates</taxon>
        <taxon>Haplorrhini</taxon>
        <taxon>Catarrhini</taxon>
        <taxon>Hominidae</taxon>
        <taxon>Homo</taxon>
    </lineage>
</organism>